<gene>
    <name type="primary">arbG</name>
</gene>
<comment type="function">
    <text evidence="1">Mediates the positive regulation of the beta-glucoside (arb) operon by functioning as a transcriptional antiterminator. This is an RNA-binding protein that recognizes a specific sequence located just upstream of two termination sites within the operon (By similarity).</text>
</comment>
<comment type="PTM">
    <text evidence="1">Phosphorylated and inactivated by ArbF (EII-Bgl). The degree of phosphorylation is dependent on the presence or absence of beta-glucosides which act as inducers of the operon expression. Addition of inducer result in the rapid dephosphorylation of ArbG (By similarity).</text>
</comment>
<comment type="similarity">
    <text evidence="3">Belongs to the transcriptional antiterminator BglG family.</text>
</comment>
<accession>P26211</accession>
<protein>
    <recommendedName>
        <fullName>Beta-glucoside operon antiterminator</fullName>
    </recommendedName>
</protein>
<organism>
    <name type="scientific">Dickeya chrysanthemi</name>
    <name type="common">Pectobacterium chrysanthemi</name>
    <name type="synonym">Erwinia chrysanthemi</name>
    <dbReference type="NCBI Taxonomy" id="556"/>
    <lineage>
        <taxon>Bacteria</taxon>
        <taxon>Pseudomonadati</taxon>
        <taxon>Pseudomonadota</taxon>
        <taxon>Gammaproteobacteria</taxon>
        <taxon>Enterobacterales</taxon>
        <taxon>Pectobacteriaceae</taxon>
        <taxon>Dickeya</taxon>
    </lineage>
</organism>
<proteinExistence type="inferred from homology"/>
<reference key="1">
    <citation type="journal article" date="1992" name="J. Bacteriol.">
        <title>Nucleotide sequences of the arb genes, which control beta-glucoside utilization in Erwinia chrysanthemi: comparison with the Escherichia coli bgl operon and evidence for a new beta-glycohydrolase family including enzymes from eubacteria, archeabacteria, and humans.</title>
        <authorList>
            <person name="el Hassouni M."/>
            <person name="Henrissat B."/>
            <person name="Chippaux M."/>
            <person name="Barras F."/>
        </authorList>
    </citation>
    <scope>NUCLEOTIDE SEQUENCE [GENOMIC DNA]</scope>
</reference>
<keyword id="KW-0010">Activator</keyword>
<keyword id="KW-0597">Phosphoprotein</keyword>
<keyword id="KW-0677">Repeat</keyword>
<keyword id="KW-0694">RNA-binding</keyword>
<keyword id="KW-0804">Transcription</keyword>
<keyword id="KW-0805">Transcription regulation</keyword>
<evidence type="ECO:0000250" key="1"/>
<evidence type="ECO:0000255" key="2">
    <source>
        <dbReference type="PROSITE-ProRule" id="PRU00704"/>
    </source>
</evidence>
<evidence type="ECO:0000305" key="3"/>
<dbReference type="EMBL" id="M81772">
    <property type="protein sequence ID" value="AAA24813.1"/>
    <property type="molecule type" value="Genomic_DNA"/>
</dbReference>
<dbReference type="PIR" id="A42603">
    <property type="entry name" value="A42603"/>
</dbReference>
<dbReference type="SMR" id="P26211"/>
<dbReference type="GO" id="GO:0003723">
    <property type="term" value="F:RNA binding"/>
    <property type="evidence" value="ECO:0007669"/>
    <property type="project" value="UniProtKB-KW"/>
</dbReference>
<dbReference type="GO" id="GO:0045893">
    <property type="term" value="P:positive regulation of DNA-templated transcription"/>
    <property type="evidence" value="ECO:0007669"/>
    <property type="project" value="InterPro"/>
</dbReference>
<dbReference type="Gene3D" id="2.30.24.10">
    <property type="entry name" value="CAT RNA-binding domain"/>
    <property type="match status" value="1"/>
</dbReference>
<dbReference type="Gene3D" id="1.10.1790.10">
    <property type="entry name" value="PRD domain"/>
    <property type="match status" value="2"/>
</dbReference>
<dbReference type="InterPro" id="IPR050661">
    <property type="entry name" value="BglG_antiterminators"/>
</dbReference>
<dbReference type="InterPro" id="IPR004341">
    <property type="entry name" value="CAT_RNA-bd_dom"/>
</dbReference>
<dbReference type="InterPro" id="IPR036650">
    <property type="entry name" value="CAT_RNA-bd_dom_sf"/>
</dbReference>
<dbReference type="InterPro" id="IPR011608">
    <property type="entry name" value="PRD"/>
</dbReference>
<dbReference type="InterPro" id="IPR036634">
    <property type="entry name" value="PRD_sf"/>
</dbReference>
<dbReference type="InterPro" id="IPR001550">
    <property type="entry name" value="Transcrpt_antitermin_CS"/>
</dbReference>
<dbReference type="NCBIfam" id="NF046042">
    <property type="entry name" value="LicT"/>
    <property type="match status" value="1"/>
</dbReference>
<dbReference type="NCBIfam" id="NF007295">
    <property type="entry name" value="PRK09772.1"/>
    <property type="match status" value="1"/>
</dbReference>
<dbReference type="PANTHER" id="PTHR30185">
    <property type="entry name" value="CRYPTIC BETA-GLUCOSIDE BGL OPERON ANTITERMINATOR"/>
    <property type="match status" value="1"/>
</dbReference>
<dbReference type="PANTHER" id="PTHR30185:SF15">
    <property type="entry name" value="CRYPTIC BETA-GLUCOSIDE BGL OPERON ANTITERMINATOR"/>
    <property type="match status" value="1"/>
</dbReference>
<dbReference type="Pfam" id="PF03123">
    <property type="entry name" value="CAT_RBD"/>
    <property type="match status" value="1"/>
</dbReference>
<dbReference type="Pfam" id="PF00874">
    <property type="entry name" value="PRD"/>
    <property type="match status" value="2"/>
</dbReference>
<dbReference type="SMART" id="SM01061">
    <property type="entry name" value="CAT_RBD"/>
    <property type="match status" value="1"/>
</dbReference>
<dbReference type="SUPFAM" id="SSF63520">
    <property type="entry name" value="PTS-regulatory domain, PRD"/>
    <property type="match status" value="2"/>
</dbReference>
<dbReference type="SUPFAM" id="SSF50151">
    <property type="entry name" value="SacY-like RNA-binding domain"/>
    <property type="match status" value="1"/>
</dbReference>
<dbReference type="PROSITE" id="PS00654">
    <property type="entry name" value="PRD_1"/>
    <property type="match status" value="1"/>
</dbReference>
<dbReference type="PROSITE" id="PS51372">
    <property type="entry name" value="PRD_2"/>
    <property type="match status" value="2"/>
</dbReference>
<name>ARBG_DICCH</name>
<feature type="chain" id="PRO_0000204243" description="Beta-glucoside operon antiterminator">
    <location>
        <begin position="1"/>
        <end position="283"/>
    </location>
</feature>
<feature type="domain" description="PRD 1" evidence="2">
    <location>
        <begin position="65"/>
        <end position="170"/>
    </location>
</feature>
<feature type="domain" description="PRD 2" evidence="2">
    <location>
        <begin position="171"/>
        <end position="280"/>
    </location>
</feature>
<sequence>MKIAKILNNNVVTVMDEQNNEQVVMGRGLGFKKRPGDTVNAALIEKIFSLRSSELTARLSDVLERIPLEVVTTADRIIALAKEKLGGNLQNSLYISLTDHCHFAIERHRQGVDIRNGLQWEVKRLYQKEFAIGLDALDIIHRRLGVRLPEDEAGFIALHLVNAQLDSHMPEVMRITRVMQEILNIVKYQLNLDYNEQAFSYHRFVTHLKFFAQRLLGRTPVFSEDESLHDVVKEKYTLAYHCAEKIQDHIMLHYDYTLTKEELMFLAIHIERVRSELQEQTAE</sequence>